<comment type="function">
    <text evidence="1">Catalyzes the formation of 6,7-dimethyl-8-ribityllumazine by condensation of 5-amino-6-(D-ribitylamino)uracil with 3,4-dihydroxy-2-butanone 4-phosphate. This is the penultimate step in the biosynthesis of riboflavin.</text>
</comment>
<comment type="catalytic activity">
    <reaction evidence="1">
        <text>(2S)-2-hydroxy-3-oxobutyl phosphate + 5-amino-6-(D-ribitylamino)uracil = 6,7-dimethyl-8-(1-D-ribityl)lumazine + phosphate + 2 H2O + H(+)</text>
        <dbReference type="Rhea" id="RHEA:26152"/>
        <dbReference type="ChEBI" id="CHEBI:15377"/>
        <dbReference type="ChEBI" id="CHEBI:15378"/>
        <dbReference type="ChEBI" id="CHEBI:15934"/>
        <dbReference type="ChEBI" id="CHEBI:43474"/>
        <dbReference type="ChEBI" id="CHEBI:58201"/>
        <dbReference type="ChEBI" id="CHEBI:58830"/>
        <dbReference type="EC" id="2.5.1.78"/>
    </reaction>
</comment>
<comment type="pathway">
    <text evidence="1">Cofactor biosynthesis; riboflavin biosynthesis; riboflavin from 2-hydroxy-3-oxobutyl phosphate and 5-amino-6-(D-ribitylamino)uracil: step 1/2.</text>
</comment>
<comment type="subunit">
    <text evidence="1">Forms an icosahedral capsid composed of 60 subunits, arranged as a dodecamer of pentamers.</text>
</comment>
<comment type="subcellular location">
    <subcellularLocation>
        <location evidence="2">Secreted</location>
    </subcellularLocation>
    <text evidence="3">Could be present extracellularly due to cell lysis.</text>
</comment>
<comment type="similarity">
    <text evidence="1">Belongs to the DMRL synthase family.</text>
</comment>
<sequence>MTLKTIEGTFIAPKGRYALVVGRFNSFVVESLVSGAVDALVRHGVAESEITIIRAPGAFEIPLVTQKVAQQGGFDAIIALGAVIRGGTPHFEYVAGECTKGLAQVSLQFGIPVAFGVLTVDSIEQAIERSGTKAGNKGAEAALSALEMVSLLAQLEAK</sequence>
<reference key="1">
    <citation type="journal article" date="2006" name="Genome Biol.">
        <title>Genomic analysis reveals that Pseudomonas aeruginosa virulence is combinatorial.</title>
        <authorList>
            <person name="Lee D.G."/>
            <person name="Urbach J.M."/>
            <person name="Wu G."/>
            <person name="Liberati N.T."/>
            <person name="Feinbaum R.L."/>
            <person name="Miyata S."/>
            <person name="Diggins L.T."/>
            <person name="He J."/>
            <person name="Saucier M."/>
            <person name="Deziel E."/>
            <person name="Friedman L."/>
            <person name="Li L."/>
            <person name="Grills G."/>
            <person name="Montgomery K."/>
            <person name="Kucherlapati R."/>
            <person name="Rahme L.G."/>
            <person name="Ausubel F.M."/>
        </authorList>
    </citation>
    <scope>NUCLEOTIDE SEQUENCE [LARGE SCALE GENOMIC DNA]</scope>
    <source>
        <strain>UCBPP-PA14</strain>
    </source>
</reference>
<reference key="2">
    <citation type="journal article" date="2014" name="Proteomics">
        <title>Extracellular Ser/Thr/Tyr phosphorylated proteins of Pseudomonas aeruginosa PA14 strain.</title>
        <authorList>
            <person name="Ouidir T."/>
            <person name="Jarnier F."/>
            <person name="Cosette P."/>
            <person name="Jouenne T."/>
            <person name="Hardouin J."/>
        </authorList>
    </citation>
    <scope>IDENTIFICATION BY MASS SPECTROMETRY</scope>
    <scope>SUBCELLULAR LOCATION</scope>
    <scope>PHOSPHORYLATION AT THR-88</scope>
    <source>
        <strain>UCBPP-PA14</strain>
    </source>
</reference>
<evidence type="ECO:0000255" key="1">
    <source>
        <dbReference type="HAMAP-Rule" id="MF_00178"/>
    </source>
</evidence>
<evidence type="ECO:0000269" key="2">
    <source>
    </source>
</evidence>
<evidence type="ECO:0000305" key="3"/>
<name>RISB_PSEAB</name>
<dbReference type="EC" id="2.5.1.78" evidence="1"/>
<dbReference type="EMBL" id="CP000438">
    <property type="protein sequence ID" value="ABJ13326.1"/>
    <property type="molecule type" value="Genomic_DNA"/>
</dbReference>
<dbReference type="SMR" id="Q02SM0"/>
<dbReference type="iPTMnet" id="Q02SM0"/>
<dbReference type="KEGG" id="pau:PA14_11430"/>
<dbReference type="PseudoCAP" id="PA14_11430"/>
<dbReference type="HOGENOM" id="CLU_089358_1_1_6"/>
<dbReference type="BioCyc" id="PAER208963:G1G74-951-MONOMER"/>
<dbReference type="UniPathway" id="UPA00275">
    <property type="reaction ID" value="UER00404"/>
</dbReference>
<dbReference type="Proteomes" id="UP000000653">
    <property type="component" value="Chromosome"/>
</dbReference>
<dbReference type="GO" id="GO:0005829">
    <property type="term" value="C:cytosol"/>
    <property type="evidence" value="ECO:0007669"/>
    <property type="project" value="TreeGrafter"/>
</dbReference>
<dbReference type="GO" id="GO:0005576">
    <property type="term" value="C:extracellular region"/>
    <property type="evidence" value="ECO:0007669"/>
    <property type="project" value="UniProtKB-SubCell"/>
</dbReference>
<dbReference type="GO" id="GO:0009349">
    <property type="term" value="C:riboflavin synthase complex"/>
    <property type="evidence" value="ECO:0007669"/>
    <property type="project" value="InterPro"/>
</dbReference>
<dbReference type="GO" id="GO:0000906">
    <property type="term" value="F:6,7-dimethyl-8-ribityllumazine synthase activity"/>
    <property type="evidence" value="ECO:0007669"/>
    <property type="project" value="UniProtKB-UniRule"/>
</dbReference>
<dbReference type="GO" id="GO:0009231">
    <property type="term" value="P:riboflavin biosynthetic process"/>
    <property type="evidence" value="ECO:0007669"/>
    <property type="project" value="UniProtKB-UniRule"/>
</dbReference>
<dbReference type="CDD" id="cd09209">
    <property type="entry name" value="Lumazine_synthase-I"/>
    <property type="match status" value="1"/>
</dbReference>
<dbReference type="FunFam" id="3.40.50.960:FF:000001">
    <property type="entry name" value="6,7-dimethyl-8-ribityllumazine synthase"/>
    <property type="match status" value="1"/>
</dbReference>
<dbReference type="Gene3D" id="3.40.50.960">
    <property type="entry name" value="Lumazine/riboflavin synthase"/>
    <property type="match status" value="1"/>
</dbReference>
<dbReference type="HAMAP" id="MF_00178">
    <property type="entry name" value="Lumazine_synth"/>
    <property type="match status" value="1"/>
</dbReference>
<dbReference type="InterPro" id="IPR034964">
    <property type="entry name" value="LS"/>
</dbReference>
<dbReference type="InterPro" id="IPR002180">
    <property type="entry name" value="LS/RS"/>
</dbReference>
<dbReference type="InterPro" id="IPR036467">
    <property type="entry name" value="LS/RS_sf"/>
</dbReference>
<dbReference type="NCBIfam" id="TIGR00114">
    <property type="entry name" value="lumazine-synth"/>
    <property type="match status" value="1"/>
</dbReference>
<dbReference type="NCBIfam" id="NF000812">
    <property type="entry name" value="PRK00061.1-4"/>
    <property type="match status" value="1"/>
</dbReference>
<dbReference type="PANTHER" id="PTHR21058:SF0">
    <property type="entry name" value="6,7-DIMETHYL-8-RIBITYLLUMAZINE SYNTHASE"/>
    <property type="match status" value="1"/>
</dbReference>
<dbReference type="PANTHER" id="PTHR21058">
    <property type="entry name" value="6,7-DIMETHYL-8-RIBITYLLUMAZINE SYNTHASE DMRL SYNTHASE LUMAZINE SYNTHASE"/>
    <property type="match status" value="1"/>
</dbReference>
<dbReference type="Pfam" id="PF00885">
    <property type="entry name" value="DMRL_synthase"/>
    <property type="match status" value="1"/>
</dbReference>
<dbReference type="SUPFAM" id="SSF52121">
    <property type="entry name" value="Lumazine synthase"/>
    <property type="match status" value="1"/>
</dbReference>
<proteinExistence type="evidence at protein level"/>
<accession>Q02SM0</accession>
<organism>
    <name type="scientific">Pseudomonas aeruginosa (strain UCBPP-PA14)</name>
    <dbReference type="NCBI Taxonomy" id="208963"/>
    <lineage>
        <taxon>Bacteria</taxon>
        <taxon>Pseudomonadati</taxon>
        <taxon>Pseudomonadota</taxon>
        <taxon>Gammaproteobacteria</taxon>
        <taxon>Pseudomonadales</taxon>
        <taxon>Pseudomonadaceae</taxon>
        <taxon>Pseudomonas</taxon>
    </lineage>
</organism>
<gene>
    <name evidence="1" type="primary">ribH</name>
    <name type="ordered locus">PA14_11430</name>
</gene>
<keyword id="KW-0597">Phosphoprotein</keyword>
<keyword id="KW-0686">Riboflavin biosynthesis</keyword>
<keyword id="KW-0964">Secreted</keyword>
<keyword id="KW-0808">Transferase</keyword>
<protein>
    <recommendedName>
        <fullName evidence="1">6,7-dimethyl-8-ribityllumazine synthase</fullName>
        <shortName evidence="1">DMRL synthase</shortName>
        <shortName evidence="1">LS</shortName>
        <shortName evidence="1">Lumazine synthase</shortName>
        <ecNumber evidence="1">2.5.1.78</ecNumber>
    </recommendedName>
</protein>
<feature type="chain" id="PRO_1000040487" description="6,7-dimethyl-8-ribityllumazine synthase">
    <location>
        <begin position="1"/>
        <end position="158"/>
    </location>
</feature>
<feature type="active site" description="Proton donor" evidence="1">
    <location>
        <position position="90"/>
    </location>
</feature>
<feature type="binding site" evidence="1">
    <location>
        <position position="24"/>
    </location>
    <ligand>
        <name>5-amino-6-(D-ribitylamino)uracil</name>
        <dbReference type="ChEBI" id="CHEBI:15934"/>
    </ligand>
</feature>
<feature type="binding site" evidence="1">
    <location>
        <begin position="58"/>
        <end position="60"/>
    </location>
    <ligand>
        <name>5-amino-6-(D-ribitylamino)uracil</name>
        <dbReference type="ChEBI" id="CHEBI:15934"/>
    </ligand>
</feature>
<feature type="binding site" evidence="1">
    <location>
        <begin position="82"/>
        <end position="84"/>
    </location>
    <ligand>
        <name>5-amino-6-(D-ribitylamino)uracil</name>
        <dbReference type="ChEBI" id="CHEBI:15934"/>
    </ligand>
</feature>
<feature type="binding site" evidence="1">
    <location>
        <begin position="87"/>
        <end position="88"/>
    </location>
    <ligand>
        <name>(2S)-2-hydroxy-3-oxobutyl phosphate</name>
        <dbReference type="ChEBI" id="CHEBI:58830"/>
    </ligand>
</feature>
<feature type="binding site" evidence="1">
    <location>
        <position position="115"/>
    </location>
    <ligand>
        <name>5-amino-6-(D-ribitylamino)uracil</name>
        <dbReference type="ChEBI" id="CHEBI:15934"/>
    </ligand>
</feature>
<feature type="binding site" evidence="1">
    <location>
        <position position="129"/>
    </location>
    <ligand>
        <name>(2S)-2-hydroxy-3-oxobutyl phosphate</name>
        <dbReference type="ChEBI" id="CHEBI:58830"/>
    </ligand>
</feature>
<feature type="modified residue" description="Phosphothreonine" evidence="2">
    <location>
        <position position="88"/>
    </location>
</feature>